<protein>
    <recommendedName>
        <fullName evidence="1">Single-stranded DNA-binding protein</fullName>
        <shortName evidence="1">SSB</shortName>
    </recommendedName>
</protein>
<name>SSB_VIBVU</name>
<accession>Q8DCJ0</accession>
<gene>
    <name type="primary">ssb</name>
    <name type="ordered locus">VV1_1430</name>
</gene>
<reference key="1">
    <citation type="submission" date="2002-12" db="EMBL/GenBank/DDBJ databases">
        <title>Complete genome sequence of Vibrio vulnificus CMCP6.</title>
        <authorList>
            <person name="Rhee J.H."/>
            <person name="Kim S.Y."/>
            <person name="Chung S.S."/>
            <person name="Kim J.J."/>
            <person name="Moon Y.H."/>
            <person name="Jeong H."/>
            <person name="Choy H.E."/>
        </authorList>
    </citation>
    <scope>NUCLEOTIDE SEQUENCE [LARGE SCALE GENOMIC DNA]</scope>
    <source>
        <strain>CMCP6</strain>
    </source>
</reference>
<proteinExistence type="inferred from homology"/>
<organism>
    <name type="scientific">Vibrio vulnificus (strain CMCP6)</name>
    <dbReference type="NCBI Taxonomy" id="216895"/>
    <lineage>
        <taxon>Bacteria</taxon>
        <taxon>Pseudomonadati</taxon>
        <taxon>Pseudomonadota</taxon>
        <taxon>Gammaproteobacteria</taxon>
        <taxon>Vibrionales</taxon>
        <taxon>Vibrionaceae</taxon>
        <taxon>Vibrio</taxon>
    </lineage>
</organism>
<comment type="function">
    <text evidence="1">Plays an important role in DNA replication, recombination and repair. Binds to ssDNA and to an array of partner proteins to recruit them to their sites of action during DNA metabolism.</text>
</comment>
<comment type="subunit">
    <text evidence="1">Homotetramer.</text>
</comment>
<evidence type="ECO:0000255" key="1">
    <source>
        <dbReference type="HAMAP-Rule" id="MF_00984"/>
    </source>
</evidence>
<evidence type="ECO:0000256" key="2">
    <source>
        <dbReference type="SAM" id="MobiDB-lite"/>
    </source>
</evidence>
<feature type="chain" id="PRO_0000096138" description="Single-stranded DNA-binding protein">
    <location>
        <begin position="1"/>
        <end position="179"/>
    </location>
</feature>
<feature type="domain" description="SSB" evidence="1">
    <location>
        <begin position="6"/>
        <end position="111"/>
    </location>
</feature>
<feature type="region of interest" description="Disordered" evidence="2">
    <location>
        <begin position="117"/>
        <end position="179"/>
    </location>
</feature>
<feature type="short sequence motif" description="Important for interaction with partner proteins" evidence="1">
    <location>
        <begin position="174"/>
        <end position="179"/>
    </location>
</feature>
<feature type="compositionally biased region" description="Low complexity" evidence="2">
    <location>
        <begin position="117"/>
        <end position="165"/>
    </location>
</feature>
<dbReference type="EMBL" id="AE016795">
    <property type="protein sequence ID" value="AAO09870.1"/>
    <property type="molecule type" value="Genomic_DNA"/>
</dbReference>
<dbReference type="RefSeq" id="WP_011079389.1">
    <property type="nucleotide sequence ID" value="NC_004459.3"/>
</dbReference>
<dbReference type="SMR" id="Q8DCJ0"/>
<dbReference type="KEGG" id="vvu:VV1_1430"/>
<dbReference type="HOGENOM" id="CLU_078758_0_2_6"/>
<dbReference type="Proteomes" id="UP000002275">
    <property type="component" value="Chromosome 1"/>
</dbReference>
<dbReference type="GO" id="GO:0009295">
    <property type="term" value="C:nucleoid"/>
    <property type="evidence" value="ECO:0007669"/>
    <property type="project" value="TreeGrafter"/>
</dbReference>
<dbReference type="GO" id="GO:0003697">
    <property type="term" value="F:single-stranded DNA binding"/>
    <property type="evidence" value="ECO:0007669"/>
    <property type="project" value="UniProtKB-UniRule"/>
</dbReference>
<dbReference type="GO" id="GO:0006310">
    <property type="term" value="P:DNA recombination"/>
    <property type="evidence" value="ECO:0007669"/>
    <property type="project" value="UniProtKB-UniRule"/>
</dbReference>
<dbReference type="GO" id="GO:0006281">
    <property type="term" value="P:DNA repair"/>
    <property type="evidence" value="ECO:0007669"/>
    <property type="project" value="UniProtKB-UniRule"/>
</dbReference>
<dbReference type="GO" id="GO:0006260">
    <property type="term" value="P:DNA replication"/>
    <property type="evidence" value="ECO:0007669"/>
    <property type="project" value="UniProtKB-UniRule"/>
</dbReference>
<dbReference type="CDD" id="cd04496">
    <property type="entry name" value="SSB_OBF"/>
    <property type="match status" value="1"/>
</dbReference>
<dbReference type="FunFam" id="2.40.50.140:FF:000065">
    <property type="entry name" value="Single-stranded DNA-binding protein"/>
    <property type="match status" value="1"/>
</dbReference>
<dbReference type="Gene3D" id="2.40.50.140">
    <property type="entry name" value="Nucleic acid-binding proteins"/>
    <property type="match status" value="1"/>
</dbReference>
<dbReference type="HAMAP" id="MF_00984">
    <property type="entry name" value="SSB"/>
    <property type="match status" value="1"/>
</dbReference>
<dbReference type="InterPro" id="IPR012340">
    <property type="entry name" value="NA-bd_OB-fold"/>
</dbReference>
<dbReference type="InterPro" id="IPR000424">
    <property type="entry name" value="Primosome_PriB/ssb"/>
</dbReference>
<dbReference type="InterPro" id="IPR011344">
    <property type="entry name" value="ssDNA-bd"/>
</dbReference>
<dbReference type="NCBIfam" id="NF006533">
    <property type="entry name" value="PRK09010.1"/>
    <property type="match status" value="1"/>
</dbReference>
<dbReference type="NCBIfam" id="TIGR00621">
    <property type="entry name" value="ssb"/>
    <property type="match status" value="1"/>
</dbReference>
<dbReference type="PANTHER" id="PTHR10302">
    <property type="entry name" value="SINGLE-STRANDED DNA-BINDING PROTEIN"/>
    <property type="match status" value="1"/>
</dbReference>
<dbReference type="PANTHER" id="PTHR10302:SF27">
    <property type="entry name" value="SINGLE-STRANDED DNA-BINDING PROTEIN"/>
    <property type="match status" value="1"/>
</dbReference>
<dbReference type="Pfam" id="PF00436">
    <property type="entry name" value="SSB"/>
    <property type="match status" value="1"/>
</dbReference>
<dbReference type="SUPFAM" id="SSF50249">
    <property type="entry name" value="Nucleic acid-binding proteins"/>
    <property type="match status" value="1"/>
</dbReference>
<dbReference type="PROSITE" id="PS50935">
    <property type="entry name" value="SSB"/>
    <property type="match status" value="1"/>
</dbReference>
<sequence>MASRGINKVILVGNLGNDPEIRYMPSGGAVANITVATSETWRDKATGEPREKTEWHRVTLYGKLAEVAGEYLRKGSQVYIEGQLQTRKWQDQNGQDRYSTEVVVQGYNGIMQMLGGRQQQGGAPAMGGAPQQQQGGWGQPQQPAAQPSYQKQAPAQQQPMQSQPQYNEPPMDFDDDIPF</sequence>
<keyword id="KW-0227">DNA damage</keyword>
<keyword id="KW-0233">DNA recombination</keyword>
<keyword id="KW-0234">DNA repair</keyword>
<keyword id="KW-0235">DNA replication</keyword>
<keyword id="KW-0238">DNA-binding</keyword>